<name>ZG16_MOUSE</name>
<dbReference type="EMBL" id="BC031800">
    <property type="protein sequence ID" value="AAH31800.1"/>
    <property type="molecule type" value="mRNA"/>
</dbReference>
<dbReference type="CCDS" id="CCDS21856.1"/>
<dbReference type="RefSeq" id="NP_081194.1">
    <property type="nucleotide sequence ID" value="NM_026918.3"/>
</dbReference>
<dbReference type="RefSeq" id="XP_006508238.1">
    <property type="nucleotide sequence ID" value="XM_006508175.3"/>
</dbReference>
<dbReference type="SMR" id="Q8K0C5"/>
<dbReference type="FunCoup" id="Q8K0C5">
    <property type="interactions" value="15"/>
</dbReference>
<dbReference type="STRING" id="10090.ENSMUSP00000145876"/>
<dbReference type="iPTMnet" id="Q8K0C5"/>
<dbReference type="PhosphoSitePlus" id="Q8K0C5"/>
<dbReference type="PaxDb" id="10090-ENSMUSP00000056916"/>
<dbReference type="PeptideAtlas" id="Q8K0C5"/>
<dbReference type="ProteomicsDB" id="275366"/>
<dbReference type="Antibodypedia" id="43439">
    <property type="antibodies" value="87 antibodies from 17 providers"/>
</dbReference>
<dbReference type="DNASU" id="69036"/>
<dbReference type="Ensembl" id="ENSMUST00000051122.7">
    <property type="protein sequence ID" value="ENSMUSP00000056916.6"/>
    <property type="gene ID" value="ENSMUSG00000049350.7"/>
</dbReference>
<dbReference type="Ensembl" id="ENSMUST00000205424.2">
    <property type="protein sequence ID" value="ENSMUSP00000145876.2"/>
    <property type="gene ID" value="ENSMUSG00000049350.7"/>
</dbReference>
<dbReference type="GeneID" id="69036"/>
<dbReference type="KEGG" id="mmu:69036"/>
<dbReference type="UCSC" id="uc009jue.1">
    <property type="organism name" value="mouse"/>
</dbReference>
<dbReference type="AGR" id="MGI:1916286"/>
<dbReference type="CTD" id="653808"/>
<dbReference type="MGI" id="MGI:1916286">
    <property type="gene designation" value="Zg16"/>
</dbReference>
<dbReference type="VEuPathDB" id="HostDB:ENSMUSG00000049350"/>
<dbReference type="eggNOG" id="ENOG502S4MA">
    <property type="taxonomic scope" value="Eukaryota"/>
</dbReference>
<dbReference type="GeneTree" id="ENSGT00940000159195"/>
<dbReference type="HOGENOM" id="CLU_104246_0_0_1"/>
<dbReference type="InParanoid" id="Q8K0C5"/>
<dbReference type="OMA" id="DVYPSTC"/>
<dbReference type="OrthoDB" id="2415936at2759"/>
<dbReference type="PhylomeDB" id="Q8K0C5"/>
<dbReference type="TreeFam" id="TF333440"/>
<dbReference type="BioGRID-ORCS" id="69036">
    <property type="hits" value="4 hits in 76 CRISPR screens"/>
</dbReference>
<dbReference type="ChiTaRS" id="Zg16">
    <property type="organism name" value="mouse"/>
</dbReference>
<dbReference type="PRO" id="PR:Q8K0C5"/>
<dbReference type="Proteomes" id="UP000000589">
    <property type="component" value="Chromosome 7"/>
</dbReference>
<dbReference type="RNAct" id="Q8K0C5">
    <property type="molecule type" value="protein"/>
</dbReference>
<dbReference type="Bgee" id="ENSMUSG00000049350">
    <property type="expression patterns" value="Expressed in left colon and 160 other cell types or tissues"/>
</dbReference>
<dbReference type="ExpressionAtlas" id="Q8K0C5">
    <property type="expression patterns" value="baseline and differential"/>
</dbReference>
<dbReference type="GO" id="GO:0062023">
    <property type="term" value="C:collagen-containing extracellular matrix"/>
    <property type="evidence" value="ECO:0000250"/>
    <property type="project" value="UniProtKB"/>
</dbReference>
<dbReference type="GO" id="GO:0005796">
    <property type="term" value="C:Golgi lumen"/>
    <property type="evidence" value="ECO:0000250"/>
    <property type="project" value="UniProtKB"/>
</dbReference>
<dbReference type="GO" id="GO:0070701">
    <property type="term" value="C:mucus layer"/>
    <property type="evidence" value="ECO:0000314"/>
    <property type="project" value="MGI"/>
</dbReference>
<dbReference type="GO" id="GO:0042589">
    <property type="term" value="C:zymogen granule membrane"/>
    <property type="evidence" value="ECO:0007669"/>
    <property type="project" value="Ensembl"/>
</dbReference>
<dbReference type="GO" id="GO:0030246">
    <property type="term" value="F:carbohydrate binding"/>
    <property type="evidence" value="ECO:0007669"/>
    <property type="project" value="UniProtKB-KW"/>
</dbReference>
<dbReference type="GO" id="GO:0042834">
    <property type="term" value="F:peptidoglycan binding"/>
    <property type="evidence" value="ECO:0000314"/>
    <property type="project" value="MGI"/>
</dbReference>
<dbReference type="GO" id="GO:0050830">
    <property type="term" value="P:defense response to Gram-positive bacterium"/>
    <property type="evidence" value="ECO:0000315"/>
    <property type="project" value="MGI"/>
</dbReference>
<dbReference type="GO" id="GO:0015031">
    <property type="term" value="P:protein transport"/>
    <property type="evidence" value="ECO:0007669"/>
    <property type="project" value="UniProtKB-KW"/>
</dbReference>
<dbReference type="GO" id="GO:0052373">
    <property type="term" value="P:suppression of symbiont entry into host"/>
    <property type="evidence" value="ECO:0000315"/>
    <property type="project" value="MGI"/>
</dbReference>
<dbReference type="CDD" id="cd09611">
    <property type="entry name" value="Jacalin_ZG16_like"/>
    <property type="match status" value="1"/>
</dbReference>
<dbReference type="FunFam" id="2.100.10.30:FF:000002">
    <property type="entry name" value="Zymogen granule membrane protein 16"/>
    <property type="match status" value="1"/>
</dbReference>
<dbReference type="Gene3D" id="2.100.10.30">
    <property type="entry name" value="Jacalin-like lectin domain"/>
    <property type="match status" value="1"/>
</dbReference>
<dbReference type="InterPro" id="IPR001229">
    <property type="entry name" value="Jacalin-like_lectin_dom"/>
</dbReference>
<dbReference type="InterPro" id="IPR036404">
    <property type="entry name" value="Jacalin-like_lectin_dom_sf"/>
</dbReference>
<dbReference type="InterPro" id="IPR052321">
    <property type="entry name" value="PolyBind_ProtTraffic"/>
</dbReference>
<dbReference type="PANTHER" id="PTHR33589">
    <property type="entry name" value="OS11G0524900 PROTEIN"/>
    <property type="match status" value="1"/>
</dbReference>
<dbReference type="PANTHER" id="PTHR33589:SF4">
    <property type="entry name" value="ZYMOGEN GRANULE MEMBRANE PROTEIN 16"/>
    <property type="match status" value="1"/>
</dbReference>
<dbReference type="Pfam" id="PF01419">
    <property type="entry name" value="Jacalin"/>
    <property type="match status" value="1"/>
</dbReference>
<dbReference type="SMART" id="SM00915">
    <property type="entry name" value="Jacalin"/>
    <property type="match status" value="1"/>
</dbReference>
<dbReference type="SUPFAM" id="SSF51101">
    <property type="entry name" value="Mannose-binding lectins"/>
    <property type="match status" value="1"/>
</dbReference>
<dbReference type="PROSITE" id="PS51752">
    <property type="entry name" value="JACALIN_LECTIN"/>
    <property type="match status" value="1"/>
</dbReference>
<proteinExistence type="evidence at protein level"/>
<keyword id="KW-0968">Cytoplasmic vesicle</keyword>
<keyword id="KW-0272">Extracellular matrix</keyword>
<keyword id="KW-0333">Golgi apparatus</keyword>
<keyword id="KW-0430">Lectin</keyword>
<keyword id="KW-0653">Protein transport</keyword>
<keyword id="KW-1185">Reference proteome</keyword>
<keyword id="KW-0964">Secreted</keyword>
<keyword id="KW-0732">Signal</keyword>
<keyword id="KW-0813">Transport</keyword>
<gene>
    <name type="primary">Zg16</name>
</gene>
<feature type="signal peptide" evidence="1">
    <location>
        <begin position="1"/>
        <end position="16"/>
    </location>
</feature>
<feature type="chain" id="PRO_0000017571" description="Zymogen granule membrane protein 16">
    <location>
        <begin position="17"/>
        <end position="167"/>
    </location>
</feature>
<feature type="domain" description="Jacalin-type lectin" evidence="4">
    <location>
        <begin position="24"/>
        <end position="159"/>
    </location>
</feature>
<sequence>MLAVALLVLLCASASANSIQSRTSSYSGEYGGKGGKRFSHSGNQLDGPITAFRIRVNRYYIVGLQVRYGTVWSDYVGGTQGDLEEIFLHPGESVIQVSGKYKSYVKQMIFVTDKGRYLPFGKASGTSFNAVPLHPNTVLRFISGRSGSAIDSISLHWDTYPSHCNTC</sequence>
<evidence type="ECO:0000250" key="1"/>
<evidence type="ECO:0000250" key="2">
    <source>
        <dbReference type="UniProtKB" id="O60844"/>
    </source>
</evidence>
<evidence type="ECO:0000250" key="3">
    <source>
        <dbReference type="UniProtKB" id="Q8CJD3"/>
    </source>
</evidence>
<evidence type="ECO:0000255" key="4">
    <source>
        <dbReference type="PROSITE-ProRule" id="PRU01088"/>
    </source>
</evidence>
<evidence type="ECO:0000305" key="5"/>
<organism>
    <name type="scientific">Mus musculus</name>
    <name type="common">Mouse</name>
    <dbReference type="NCBI Taxonomy" id="10090"/>
    <lineage>
        <taxon>Eukaryota</taxon>
        <taxon>Metazoa</taxon>
        <taxon>Chordata</taxon>
        <taxon>Craniata</taxon>
        <taxon>Vertebrata</taxon>
        <taxon>Euteleostomi</taxon>
        <taxon>Mammalia</taxon>
        <taxon>Eutheria</taxon>
        <taxon>Euarchontoglires</taxon>
        <taxon>Glires</taxon>
        <taxon>Rodentia</taxon>
        <taxon>Myomorpha</taxon>
        <taxon>Muroidea</taxon>
        <taxon>Muridae</taxon>
        <taxon>Murinae</taxon>
        <taxon>Mus</taxon>
        <taxon>Mus</taxon>
    </lineage>
</organism>
<comment type="function">
    <text evidence="1">May play a role in protein trafficking. May act as a linker molecule between the submembranous matrix on the luminal side of zymogen granule membrane (ZGM) and aggregated secretory proteins during granule formation in the TGN (By similarity).</text>
</comment>
<comment type="subcellular location">
    <subcellularLocation>
        <location evidence="2">Secreted</location>
        <location evidence="2">Extracellular space</location>
        <location evidence="2">Extracellular matrix</location>
    </subcellularLocation>
    <subcellularLocation>
        <location evidence="3">Zymogen granule lumen</location>
    </subcellularLocation>
    <subcellularLocation>
        <location evidence="3">Golgi apparatus lumen</location>
    </subcellularLocation>
</comment>
<comment type="similarity">
    <text evidence="4 5">Belongs to the jacalin lectin family.</text>
</comment>
<protein>
    <recommendedName>
        <fullName>Zymogen granule membrane protein 16</fullName>
        <shortName>Zymogen granule protein 16</shortName>
    </recommendedName>
    <alternativeName>
        <fullName>Secretory lectin ZG16</fullName>
    </alternativeName>
</protein>
<accession>Q8K0C5</accession>
<reference key="1">
    <citation type="journal article" date="2004" name="Genome Res.">
        <title>The status, quality, and expansion of the NIH full-length cDNA project: the Mammalian Gene Collection (MGC).</title>
        <authorList>
            <consortium name="The MGC Project Team"/>
        </authorList>
    </citation>
    <scope>NUCLEOTIDE SEQUENCE [LARGE SCALE MRNA]</scope>
    <source>
        <strain>FVB/N</strain>
        <tissue>Colon</tissue>
    </source>
</reference>
<reference key="2">
    <citation type="journal article" date="2010" name="Cell">
        <title>A tissue-specific atlas of mouse protein phosphorylation and expression.</title>
        <authorList>
            <person name="Huttlin E.L."/>
            <person name="Jedrychowski M.P."/>
            <person name="Elias J.E."/>
            <person name="Goswami T."/>
            <person name="Rad R."/>
            <person name="Beausoleil S.A."/>
            <person name="Villen J."/>
            <person name="Haas W."/>
            <person name="Sowa M.E."/>
            <person name="Gygi S.P."/>
        </authorList>
    </citation>
    <scope>IDENTIFICATION BY MASS SPECTROMETRY [LARGE SCALE ANALYSIS]</scope>
    <source>
        <tissue>Liver</tissue>
        <tissue>Lung</tissue>
        <tissue>Pancreas</tissue>
        <tissue>Spleen</tissue>
    </source>
</reference>